<name>NUOE_BUCAI</name>
<keyword id="KW-0001">2Fe-2S</keyword>
<keyword id="KW-0408">Iron</keyword>
<keyword id="KW-0411">Iron-sulfur</keyword>
<keyword id="KW-0479">Metal-binding</keyword>
<keyword id="KW-0520">NAD</keyword>
<keyword id="KW-0874">Quinone</keyword>
<keyword id="KW-1185">Reference proteome</keyword>
<keyword id="KW-1278">Translocase</keyword>
<sequence length="162" mass="18598">MQEISIKFKLTNEEINAIENQKKYYEDFRAISIEALKIVQKKRGWVSDQAIYAIAEILHINPSDVEGVATFYSQIFRKPVGRNIIRYCDSVVCFLTGYKRIQIALENYLKIKIGETTKDDRFTLLPVCCLGNCDKGPTIMINEDTYSVLTPESIPSLLESYK</sequence>
<comment type="function">
    <text evidence="1">NDH-1 shuttles electrons from NADH, via FMN and iron-sulfur (Fe-S) centers, to quinones in the respiratory chain. Couples the redox reaction to proton translocation (for every two electrons transferred, four hydrogen ions are translocated across the cytoplasmic membrane), and thus conserves the redox energy in a proton gradient (By similarity).</text>
</comment>
<comment type="catalytic activity">
    <reaction>
        <text>a quinone + NADH + 5 H(+)(in) = a quinol + NAD(+) + 4 H(+)(out)</text>
        <dbReference type="Rhea" id="RHEA:57888"/>
        <dbReference type="ChEBI" id="CHEBI:15378"/>
        <dbReference type="ChEBI" id="CHEBI:24646"/>
        <dbReference type="ChEBI" id="CHEBI:57540"/>
        <dbReference type="ChEBI" id="CHEBI:57945"/>
        <dbReference type="ChEBI" id="CHEBI:132124"/>
    </reaction>
</comment>
<comment type="cofactor">
    <cofactor evidence="3">
        <name>[2Fe-2S] cluster</name>
        <dbReference type="ChEBI" id="CHEBI:190135"/>
    </cofactor>
    <text evidence="3">Binds 1 [2Fe-2S] cluster.</text>
</comment>
<comment type="subunit">
    <text evidence="1">Composed of 13 different subunits. Subunits NuoCD, E, F, and G constitute the peripheral sector of the complex (By similarity).</text>
</comment>
<comment type="similarity">
    <text evidence="3">Belongs to the complex I 24 kDa subunit family.</text>
</comment>
<feature type="chain" id="PRO_0000118688" description="NADH-quinone oxidoreductase subunit E">
    <location>
        <begin position="1"/>
        <end position="162"/>
    </location>
</feature>
<feature type="binding site" evidence="2">
    <location>
        <position position="88"/>
    </location>
    <ligand>
        <name>[2Fe-2S] cluster</name>
        <dbReference type="ChEBI" id="CHEBI:190135"/>
    </ligand>
</feature>
<feature type="binding site" evidence="2">
    <location>
        <position position="93"/>
    </location>
    <ligand>
        <name>[2Fe-2S] cluster</name>
        <dbReference type="ChEBI" id="CHEBI:190135"/>
    </ligand>
</feature>
<feature type="binding site" evidence="2">
    <location>
        <position position="129"/>
    </location>
    <ligand>
        <name>[2Fe-2S] cluster</name>
        <dbReference type="ChEBI" id="CHEBI:190135"/>
    </ligand>
</feature>
<feature type="binding site" evidence="2">
    <location>
        <position position="133"/>
    </location>
    <ligand>
        <name>[2Fe-2S] cluster</name>
        <dbReference type="ChEBI" id="CHEBI:190135"/>
    </ligand>
</feature>
<accession>P57255</accession>
<organism>
    <name type="scientific">Buchnera aphidicola subsp. Acyrthosiphon pisum (strain APS)</name>
    <name type="common">Acyrthosiphon pisum symbiotic bacterium</name>
    <dbReference type="NCBI Taxonomy" id="107806"/>
    <lineage>
        <taxon>Bacteria</taxon>
        <taxon>Pseudomonadati</taxon>
        <taxon>Pseudomonadota</taxon>
        <taxon>Gammaproteobacteria</taxon>
        <taxon>Enterobacterales</taxon>
        <taxon>Erwiniaceae</taxon>
        <taxon>Buchnera</taxon>
    </lineage>
</organism>
<reference key="1">
    <citation type="journal article" date="2000" name="Nature">
        <title>Genome sequence of the endocellular bacterial symbiont of aphids Buchnera sp. APS.</title>
        <authorList>
            <person name="Shigenobu S."/>
            <person name="Watanabe H."/>
            <person name="Hattori M."/>
            <person name="Sakaki Y."/>
            <person name="Ishikawa H."/>
        </authorList>
    </citation>
    <scope>NUCLEOTIDE SEQUENCE [LARGE SCALE GENOMIC DNA]</scope>
    <source>
        <strain>APS</strain>
    </source>
</reference>
<protein>
    <recommendedName>
        <fullName>NADH-quinone oxidoreductase subunit E</fullName>
        <ecNumber>7.1.1.-</ecNumber>
    </recommendedName>
    <alternativeName>
        <fullName>NADH dehydrogenase I subunit E</fullName>
    </alternativeName>
    <alternativeName>
        <fullName>NDH-1 subunit E</fullName>
    </alternativeName>
</protein>
<dbReference type="EC" id="7.1.1.-"/>
<dbReference type="EMBL" id="BA000003">
    <property type="protein sequence ID" value="BAB12875.1"/>
    <property type="molecule type" value="Genomic_DNA"/>
</dbReference>
<dbReference type="RefSeq" id="NP_239989.1">
    <property type="nucleotide sequence ID" value="NC_002528.1"/>
</dbReference>
<dbReference type="RefSeq" id="WP_009874113.1">
    <property type="nucleotide sequence ID" value="NZ_AP036055.1"/>
</dbReference>
<dbReference type="SMR" id="P57255"/>
<dbReference type="STRING" id="563178.BUAP5A_155"/>
<dbReference type="EnsemblBacteria" id="BAB12875">
    <property type="protein sequence ID" value="BAB12875"/>
    <property type="gene ID" value="BAB12875"/>
</dbReference>
<dbReference type="KEGG" id="buc:BU157"/>
<dbReference type="PATRIC" id="fig|107806.10.peg.167"/>
<dbReference type="eggNOG" id="COG1905">
    <property type="taxonomic scope" value="Bacteria"/>
</dbReference>
<dbReference type="HOGENOM" id="CLU_054362_2_0_6"/>
<dbReference type="Proteomes" id="UP000001806">
    <property type="component" value="Chromosome"/>
</dbReference>
<dbReference type="GO" id="GO:0051537">
    <property type="term" value="F:2 iron, 2 sulfur cluster binding"/>
    <property type="evidence" value="ECO:0007669"/>
    <property type="project" value="UniProtKB-KW"/>
</dbReference>
<dbReference type="GO" id="GO:0046872">
    <property type="term" value="F:metal ion binding"/>
    <property type="evidence" value="ECO:0007669"/>
    <property type="project" value="UniProtKB-KW"/>
</dbReference>
<dbReference type="GO" id="GO:0003954">
    <property type="term" value="F:NADH dehydrogenase activity"/>
    <property type="evidence" value="ECO:0007669"/>
    <property type="project" value="TreeGrafter"/>
</dbReference>
<dbReference type="GO" id="GO:0048038">
    <property type="term" value="F:quinone binding"/>
    <property type="evidence" value="ECO:0007669"/>
    <property type="project" value="UniProtKB-KW"/>
</dbReference>
<dbReference type="CDD" id="cd03064">
    <property type="entry name" value="TRX_Fd_NuoE"/>
    <property type="match status" value="1"/>
</dbReference>
<dbReference type="FunFam" id="1.10.10.1590:FF:000001">
    <property type="entry name" value="NADH-quinone oxidoreductase subunit E"/>
    <property type="match status" value="1"/>
</dbReference>
<dbReference type="FunFam" id="3.40.30.10:FF:000015">
    <property type="entry name" value="NADH-quinone oxidoreductase subunit E"/>
    <property type="match status" value="1"/>
</dbReference>
<dbReference type="Gene3D" id="3.40.30.10">
    <property type="entry name" value="Glutaredoxin"/>
    <property type="match status" value="1"/>
</dbReference>
<dbReference type="Gene3D" id="1.10.10.1590">
    <property type="entry name" value="NADH-quinone oxidoreductase subunit E"/>
    <property type="match status" value="1"/>
</dbReference>
<dbReference type="InterPro" id="IPR002023">
    <property type="entry name" value="NuoE-like"/>
</dbReference>
<dbReference type="InterPro" id="IPR042128">
    <property type="entry name" value="NuoE_dom"/>
</dbReference>
<dbReference type="InterPro" id="IPR041921">
    <property type="entry name" value="NuoE_N"/>
</dbReference>
<dbReference type="InterPro" id="IPR036249">
    <property type="entry name" value="Thioredoxin-like_sf"/>
</dbReference>
<dbReference type="NCBIfam" id="TIGR01958">
    <property type="entry name" value="nuoE_fam"/>
    <property type="match status" value="1"/>
</dbReference>
<dbReference type="NCBIfam" id="NF005722">
    <property type="entry name" value="PRK07539.1-2"/>
    <property type="match status" value="1"/>
</dbReference>
<dbReference type="PANTHER" id="PTHR10371:SF3">
    <property type="entry name" value="NADH DEHYDROGENASE [UBIQUINONE] FLAVOPROTEIN 2, MITOCHONDRIAL"/>
    <property type="match status" value="1"/>
</dbReference>
<dbReference type="PANTHER" id="PTHR10371">
    <property type="entry name" value="NADH DEHYDROGENASE UBIQUINONE FLAVOPROTEIN 2, MITOCHONDRIAL"/>
    <property type="match status" value="1"/>
</dbReference>
<dbReference type="Pfam" id="PF01257">
    <property type="entry name" value="2Fe-2S_thioredx"/>
    <property type="match status" value="1"/>
</dbReference>
<dbReference type="PIRSF" id="PIRSF000216">
    <property type="entry name" value="NADH_DH_24kDa"/>
    <property type="match status" value="1"/>
</dbReference>
<dbReference type="SUPFAM" id="SSF52833">
    <property type="entry name" value="Thioredoxin-like"/>
    <property type="match status" value="1"/>
</dbReference>
<dbReference type="PROSITE" id="PS01099">
    <property type="entry name" value="COMPLEX1_24K"/>
    <property type="match status" value="1"/>
</dbReference>
<gene>
    <name type="primary">nuoE</name>
    <name type="ordered locus">BU157</name>
</gene>
<evidence type="ECO:0000250" key="1"/>
<evidence type="ECO:0000255" key="2"/>
<evidence type="ECO:0000305" key="3"/>
<proteinExistence type="inferred from homology"/>